<evidence type="ECO:0000250" key="1"/>
<evidence type="ECO:0000255" key="2"/>
<evidence type="ECO:0000269" key="3">
    <source>
    </source>
</evidence>
<evidence type="ECO:0000305" key="4"/>
<evidence type="ECO:0000312" key="5">
    <source>
        <dbReference type="FlyBase" id="FBgn0266669"/>
    </source>
</evidence>
<name>EXOC1_DROME</name>
<accession>Q9VVG4</accession>
<accession>Q95R79</accession>
<dbReference type="EMBL" id="AE014296">
    <property type="protein sequence ID" value="AAF49347.2"/>
    <property type="molecule type" value="Genomic_DNA"/>
</dbReference>
<dbReference type="EMBL" id="AY061578">
    <property type="protein sequence ID" value="AAL29126.1"/>
    <property type="molecule type" value="mRNA"/>
</dbReference>
<dbReference type="RefSeq" id="NP_648976.2">
    <property type="nucleotide sequence ID" value="NM_140719.4"/>
</dbReference>
<dbReference type="SMR" id="Q9VVG4"/>
<dbReference type="BioGRID" id="65230">
    <property type="interactions" value="11"/>
</dbReference>
<dbReference type="ComplexPortal" id="CPX-2465">
    <property type="entry name" value="Exocyst"/>
</dbReference>
<dbReference type="DIP" id="DIP-20430N"/>
<dbReference type="FunCoup" id="Q9VVG4">
    <property type="interactions" value="1983"/>
</dbReference>
<dbReference type="IntAct" id="Q9VVG4">
    <property type="interactions" value="9"/>
</dbReference>
<dbReference type="STRING" id="7227.FBpp0074993"/>
<dbReference type="iPTMnet" id="Q9VVG4"/>
<dbReference type="PaxDb" id="7227-FBpp0074993"/>
<dbReference type="EnsemblMetazoa" id="FBtr0075231">
    <property type="protein sequence ID" value="FBpp0074993"/>
    <property type="gene ID" value="FBgn0266669"/>
</dbReference>
<dbReference type="GeneID" id="39940"/>
<dbReference type="KEGG" id="dme:Dmel_CG3885"/>
<dbReference type="UCSC" id="CG3885-RA">
    <property type="organism name" value="d. melanogaster"/>
</dbReference>
<dbReference type="AGR" id="FB:FBgn0266669"/>
<dbReference type="CTD" id="39940"/>
<dbReference type="FlyBase" id="FBgn0266669">
    <property type="gene designation" value="Sec3"/>
</dbReference>
<dbReference type="VEuPathDB" id="VectorBase:FBgn0266669"/>
<dbReference type="eggNOG" id="KOG2148">
    <property type="taxonomic scope" value="Eukaryota"/>
</dbReference>
<dbReference type="HOGENOM" id="CLU_015381_1_0_1"/>
<dbReference type="InParanoid" id="Q9VVG4"/>
<dbReference type="OMA" id="NQHVMSA"/>
<dbReference type="OrthoDB" id="27109at2759"/>
<dbReference type="PhylomeDB" id="Q9VVG4"/>
<dbReference type="Reactome" id="R-DME-264876">
    <property type="pathway name" value="Insulin processing"/>
</dbReference>
<dbReference type="Reactome" id="R-DME-5620916">
    <property type="pathway name" value="VxPx cargo-targeting to cilium"/>
</dbReference>
<dbReference type="SignaLink" id="Q9VVG4"/>
<dbReference type="BioGRID-ORCS" id="39940">
    <property type="hits" value="0 hits in 1 CRISPR screen"/>
</dbReference>
<dbReference type="GenomeRNAi" id="39940"/>
<dbReference type="PRO" id="PR:Q9VVG4"/>
<dbReference type="Proteomes" id="UP000000803">
    <property type="component" value="Chromosome 3L"/>
</dbReference>
<dbReference type="Bgee" id="FBgn0266669">
    <property type="expression patterns" value="Expressed in escort cell (Drosophila) in ovary and 60 other cell types or tissues"/>
</dbReference>
<dbReference type="ExpressionAtlas" id="Q9VVG4">
    <property type="expression patterns" value="baseline and differential"/>
</dbReference>
<dbReference type="GO" id="GO:0000145">
    <property type="term" value="C:exocyst"/>
    <property type="evidence" value="ECO:0000314"/>
    <property type="project" value="FlyBase"/>
</dbReference>
<dbReference type="GO" id="GO:0005886">
    <property type="term" value="C:plasma membrane"/>
    <property type="evidence" value="ECO:0000318"/>
    <property type="project" value="GO_Central"/>
</dbReference>
<dbReference type="GO" id="GO:0005546">
    <property type="term" value="F:phosphatidylinositol-4,5-bisphosphate binding"/>
    <property type="evidence" value="ECO:0000250"/>
    <property type="project" value="FlyBase"/>
</dbReference>
<dbReference type="GO" id="GO:0006887">
    <property type="term" value="P:exocytosis"/>
    <property type="evidence" value="ECO:0000318"/>
    <property type="project" value="GO_Central"/>
</dbReference>
<dbReference type="GO" id="GO:0006893">
    <property type="term" value="P:Golgi to plasma membrane transport"/>
    <property type="evidence" value="ECO:0000318"/>
    <property type="project" value="GO_Central"/>
</dbReference>
<dbReference type="GO" id="GO:0015031">
    <property type="term" value="P:protein transport"/>
    <property type="evidence" value="ECO:0007669"/>
    <property type="project" value="UniProtKB-KW"/>
</dbReference>
<dbReference type="CDD" id="cd14683">
    <property type="entry name" value="PH-EXOC1"/>
    <property type="match status" value="1"/>
</dbReference>
<dbReference type="FunFam" id="2.30.29.90:FF:000005">
    <property type="entry name" value="Exocyst complex component 1"/>
    <property type="match status" value="1"/>
</dbReference>
<dbReference type="Gene3D" id="2.30.29.90">
    <property type="match status" value="1"/>
</dbReference>
<dbReference type="InterPro" id="IPR028258">
    <property type="entry name" value="Sec3-PIP2_bind"/>
</dbReference>
<dbReference type="InterPro" id="IPR048628">
    <property type="entry name" value="Sec3_C"/>
</dbReference>
<dbReference type="InterPro" id="IPR019160">
    <property type="entry name" value="Sec3_CC"/>
</dbReference>
<dbReference type="PANTHER" id="PTHR16092:SF14">
    <property type="entry name" value="EXOCYST COMPLEX COMPONENT 1 ISOFORM X1"/>
    <property type="match status" value="1"/>
</dbReference>
<dbReference type="PANTHER" id="PTHR16092">
    <property type="entry name" value="SEC3/SYNTAXIN-RELATED"/>
    <property type="match status" value="1"/>
</dbReference>
<dbReference type="Pfam" id="PF15277">
    <property type="entry name" value="Sec3-PIP2_bind"/>
    <property type="match status" value="1"/>
</dbReference>
<dbReference type="Pfam" id="PF20654">
    <property type="entry name" value="Sec3_C-term"/>
    <property type="match status" value="1"/>
</dbReference>
<dbReference type="Pfam" id="PF09763">
    <property type="entry name" value="Sec3_CC"/>
    <property type="match status" value="1"/>
</dbReference>
<dbReference type="SMART" id="SM01313">
    <property type="entry name" value="Sec3-PIP2_bind"/>
    <property type="match status" value="1"/>
</dbReference>
<feature type="chain" id="PRO_0000118916" description="Exocyst complex component 1">
    <location>
        <begin position="1"/>
        <end position="889"/>
    </location>
</feature>
<feature type="coiled-coil region" evidence="2">
    <location>
        <begin position="156"/>
        <end position="269"/>
    </location>
</feature>
<feature type="modified residue" description="Phosphoserine" evidence="3">
    <location>
        <position position="145"/>
    </location>
</feature>
<feature type="modified residue" description="Phosphoserine" evidence="3">
    <location>
        <position position="148"/>
    </location>
</feature>
<feature type="modified residue" description="Phosphoserine" evidence="3">
    <location>
        <position position="456"/>
    </location>
</feature>
<feature type="sequence conflict" description="In Ref. 3; AAL29126." evidence="4" ref="3">
    <original>E</original>
    <variation>Q</variation>
    <location>
        <position position="92"/>
    </location>
</feature>
<feature type="sequence conflict" description="In Ref. 3; AAL29126." evidence="4" ref="3">
    <original>V</original>
    <variation>I</variation>
    <location>
        <position position="720"/>
    </location>
</feature>
<organism>
    <name type="scientific">Drosophila melanogaster</name>
    <name type="common">Fruit fly</name>
    <dbReference type="NCBI Taxonomy" id="7227"/>
    <lineage>
        <taxon>Eukaryota</taxon>
        <taxon>Metazoa</taxon>
        <taxon>Ecdysozoa</taxon>
        <taxon>Arthropoda</taxon>
        <taxon>Hexapoda</taxon>
        <taxon>Insecta</taxon>
        <taxon>Pterygota</taxon>
        <taxon>Neoptera</taxon>
        <taxon>Endopterygota</taxon>
        <taxon>Diptera</taxon>
        <taxon>Brachycera</taxon>
        <taxon>Muscomorpha</taxon>
        <taxon>Ephydroidea</taxon>
        <taxon>Drosophilidae</taxon>
        <taxon>Drosophila</taxon>
        <taxon>Sophophora</taxon>
    </lineage>
</organism>
<proteinExistence type="evidence at protein level"/>
<comment type="function">
    <text evidence="1">Component of the exocyst complex involved in the docking of exocytic vesicles with fusion sites on the plasma membrane.</text>
</comment>
<comment type="subunit">
    <text evidence="1">The exocyst complex is composed of Sec3/Exoc1, Sec5/Exoc2, Sec6/Exoc3, Sec8/Exoc4, Sec10/Exoc5, Sec15/Exoc6, Exo70/Exoc7 and Exo84/Exoc8.</text>
</comment>
<comment type="similarity">
    <text evidence="4">Belongs to the SEC3 family.</text>
</comment>
<keyword id="KW-0175">Coiled coil</keyword>
<keyword id="KW-0268">Exocytosis</keyword>
<keyword id="KW-0597">Phosphoprotein</keyword>
<keyword id="KW-0653">Protein transport</keyword>
<keyword id="KW-1185">Reference proteome</keyword>
<keyword id="KW-0813">Transport</keyword>
<gene>
    <name evidence="5" type="primary">Sec3</name>
    <name evidence="5" type="ORF">CG3885</name>
</gene>
<protein>
    <recommendedName>
        <fullName>Exocyst complex component 1</fullName>
    </recommendedName>
    <alternativeName>
        <fullName>Exocyst complex component Sec3</fullName>
    </alternativeName>
</protein>
<sequence length="889" mass="102695">MLSIGAMANIKHTLQKELFLASGERLLSVVTVVKKKDKKPCYLCVVTTAPPVPVVTLCLIKQSEQREGEYKRKRSWQLDEIKWVDGRNEQFETHEFDLQLEKLYKWYALNPHERQNFLAVLNRQIQKSVRGQRAEFRNVPAAWLSEKSPEKVALGRAVQKTQHMDDEEDEEEEAQEFTALTDKEANELGKLFSECDFAIKDAEQFIEQLSRELHDLDGANMQSVLASEQKVLKMMEHIDNAISEADKFENRLDSYEDILGHVKETMEKIGGKNAMIEIANNNNIKLMKELNKVISQLDLPHSQQQALDEPDLKTANGRKAAIAAAQCLQQAMNSDIDPALLRLEAVQDQRKRFEKWKQKFSATVSRFMNNLFIHLGNEIGDMQVTSTELTLPNHSNVHRELTPYTELMHWTKAMDRKTYDGLMRVYTASLSKIYDRDVRNFFNLAKIQVTEKLRNSREDLDMSTSSRKSAVSTIPYGTLGINRDQWGPGVETADRMRFDALLEKVLAELEPIALQEQLFCINFFQMDVISPTTKNTQTTLEMEKAVDMTQSIISGAVSPSGDGVPQKRIDRQINEDVRKLMMGLFGCLEPELVSFIQSFERVDSFYSLYVFVRLTQHVMSAQDTHSFLSMTFASALVQVKRSFDRFMQNQLLSIREAKLHKRSKAILPYVENFENFAQTAEGIFRKSDRRTDMEKWYLQLVNAIFEGIQLHSQEHPKTPVQVVRMENYHHMYALLAQLKVPGLDALKKEAKKCYNDALKAYVTQYFGRPLEKLNQFFEGVQLKVAQGVKETEISYQMAFSKQELRKVIAQYPAREVKKGLENLYKKVEKHLSEEENLLQVVWHAMQEEFIAQYNYLEERIQKCYAGAMINLEFNIQDILAFFSDIARSH</sequence>
<reference key="1">
    <citation type="journal article" date="2000" name="Science">
        <title>The genome sequence of Drosophila melanogaster.</title>
        <authorList>
            <person name="Adams M.D."/>
            <person name="Celniker S.E."/>
            <person name="Holt R.A."/>
            <person name="Evans C.A."/>
            <person name="Gocayne J.D."/>
            <person name="Amanatides P.G."/>
            <person name="Scherer S.E."/>
            <person name="Li P.W."/>
            <person name="Hoskins R.A."/>
            <person name="Galle R.F."/>
            <person name="George R.A."/>
            <person name="Lewis S.E."/>
            <person name="Richards S."/>
            <person name="Ashburner M."/>
            <person name="Henderson S.N."/>
            <person name="Sutton G.G."/>
            <person name="Wortman J.R."/>
            <person name="Yandell M.D."/>
            <person name="Zhang Q."/>
            <person name="Chen L.X."/>
            <person name="Brandon R.C."/>
            <person name="Rogers Y.-H.C."/>
            <person name="Blazej R.G."/>
            <person name="Champe M."/>
            <person name="Pfeiffer B.D."/>
            <person name="Wan K.H."/>
            <person name="Doyle C."/>
            <person name="Baxter E.G."/>
            <person name="Helt G."/>
            <person name="Nelson C.R."/>
            <person name="Miklos G.L.G."/>
            <person name="Abril J.F."/>
            <person name="Agbayani A."/>
            <person name="An H.-J."/>
            <person name="Andrews-Pfannkoch C."/>
            <person name="Baldwin D."/>
            <person name="Ballew R.M."/>
            <person name="Basu A."/>
            <person name="Baxendale J."/>
            <person name="Bayraktaroglu L."/>
            <person name="Beasley E.M."/>
            <person name="Beeson K.Y."/>
            <person name="Benos P.V."/>
            <person name="Berman B.P."/>
            <person name="Bhandari D."/>
            <person name="Bolshakov S."/>
            <person name="Borkova D."/>
            <person name="Botchan M.R."/>
            <person name="Bouck J."/>
            <person name="Brokstein P."/>
            <person name="Brottier P."/>
            <person name="Burtis K.C."/>
            <person name="Busam D.A."/>
            <person name="Butler H."/>
            <person name="Cadieu E."/>
            <person name="Center A."/>
            <person name="Chandra I."/>
            <person name="Cherry J.M."/>
            <person name="Cawley S."/>
            <person name="Dahlke C."/>
            <person name="Davenport L.B."/>
            <person name="Davies P."/>
            <person name="de Pablos B."/>
            <person name="Delcher A."/>
            <person name="Deng Z."/>
            <person name="Mays A.D."/>
            <person name="Dew I."/>
            <person name="Dietz S.M."/>
            <person name="Dodson K."/>
            <person name="Doup L.E."/>
            <person name="Downes M."/>
            <person name="Dugan-Rocha S."/>
            <person name="Dunkov B.C."/>
            <person name="Dunn P."/>
            <person name="Durbin K.J."/>
            <person name="Evangelista C.C."/>
            <person name="Ferraz C."/>
            <person name="Ferriera S."/>
            <person name="Fleischmann W."/>
            <person name="Fosler C."/>
            <person name="Gabrielian A.E."/>
            <person name="Garg N.S."/>
            <person name="Gelbart W.M."/>
            <person name="Glasser K."/>
            <person name="Glodek A."/>
            <person name="Gong F."/>
            <person name="Gorrell J.H."/>
            <person name="Gu Z."/>
            <person name="Guan P."/>
            <person name="Harris M."/>
            <person name="Harris N.L."/>
            <person name="Harvey D.A."/>
            <person name="Heiman T.J."/>
            <person name="Hernandez J.R."/>
            <person name="Houck J."/>
            <person name="Hostin D."/>
            <person name="Houston K.A."/>
            <person name="Howland T.J."/>
            <person name="Wei M.-H."/>
            <person name="Ibegwam C."/>
            <person name="Jalali M."/>
            <person name="Kalush F."/>
            <person name="Karpen G.H."/>
            <person name="Ke Z."/>
            <person name="Kennison J.A."/>
            <person name="Ketchum K.A."/>
            <person name="Kimmel B.E."/>
            <person name="Kodira C.D."/>
            <person name="Kraft C.L."/>
            <person name="Kravitz S."/>
            <person name="Kulp D."/>
            <person name="Lai Z."/>
            <person name="Lasko P."/>
            <person name="Lei Y."/>
            <person name="Levitsky A.A."/>
            <person name="Li J.H."/>
            <person name="Li Z."/>
            <person name="Liang Y."/>
            <person name="Lin X."/>
            <person name="Liu X."/>
            <person name="Mattei B."/>
            <person name="McIntosh T.C."/>
            <person name="McLeod M.P."/>
            <person name="McPherson D."/>
            <person name="Merkulov G."/>
            <person name="Milshina N.V."/>
            <person name="Mobarry C."/>
            <person name="Morris J."/>
            <person name="Moshrefi A."/>
            <person name="Mount S.M."/>
            <person name="Moy M."/>
            <person name="Murphy B."/>
            <person name="Murphy L."/>
            <person name="Muzny D.M."/>
            <person name="Nelson D.L."/>
            <person name="Nelson D.R."/>
            <person name="Nelson K.A."/>
            <person name="Nixon K."/>
            <person name="Nusskern D.R."/>
            <person name="Pacleb J.M."/>
            <person name="Palazzolo M."/>
            <person name="Pittman G.S."/>
            <person name="Pan S."/>
            <person name="Pollard J."/>
            <person name="Puri V."/>
            <person name="Reese M.G."/>
            <person name="Reinert K."/>
            <person name="Remington K."/>
            <person name="Saunders R.D.C."/>
            <person name="Scheeler F."/>
            <person name="Shen H."/>
            <person name="Shue B.C."/>
            <person name="Siden-Kiamos I."/>
            <person name="Simpson M."/>
            <person name="Skupski M.P."/>
            <person name="Smith T.J."/>
            <person name="Spier E."/>
            <person name="Spradling A.C."/>
            <person name="Stapleton M."/>
            <person name="Strong R."/>
            <person name="Sun E."/>
            <person name="Svirskas R."/>
            <person name="Tector C."/>
            <person name="Turner R."/>
            <person name="Venter E."/>
            <person name="Wang A.H."/>
            <person name="Wang X."/>
            <person name="Wang Z.-Y."/>
            <person name="Wassarman D.A."/>
            <person name="Weinstock G.M."/>
            <person name="Weissenbach J."/>
            <person name="Williams S.M."/>
            <person name="Woodage T."/>
            <person name="Worley K.C."/>
            <person name="Wu D."/>
            <person name="Yang S."/>
            <person name="Yao Q.A."/>
            <person name="Ye J."/>
            <person name="Yeh R.-F."/>
            <person name="Zaveri J.S."/>
            <person name="Zhan M."/>
            <person name="Zhang G."/>
            <person name="Zhao Q."/>
            <person name="Zheng L."/>
            <person name="Zheng X.H."/>
            <person name="Zhong F.N."/>
            <person name="Zhong W."/>
            <person name="Zhou X."/>
            <person name="Zhu S.C."/>
            <person name="Zhu X."/>
            <person name="Smith H.O."/>
            <person name="Gibbs R.A."/>
            <person name="Myers E.W."/>
            <person name="Rubin G.M."/>
            <person name="Venter J.C."/>
        </authorList>
    </citation>
    <scope>NUCLEOTIDE SEQUENCE [LARGE SCALE GENOMIC DNA]</scope>
    <source>
        <strain>Berkeley</strain>
    </source>
</reference>
<reference key="2">
    <citation type="journal article" date="2002" name="Genome Biol.">
        <title>Annotation of the Drosophila melanogaster euchromatic genome: a systematic review.</title>
        <authorList>
            <person name="Misra S."/>
            <person name="Crosby M.A."/>
            <person name="Mungall C.J."/>
            <person name="Matthews B.B."/>
            <person name="Campbell K.S."/>
            <person name="Hradecky P."/>
            <person name="Huang Y."/>
            <person name="Kaminker J.S."/>
            <person name="Millburn G.H."/>
            <person name="Prochnik S.E."/>
            <person name="Smith C.D."/>
            <person name="Tupy J.L."/>
            <person name="Whitfield E.J."/>
            <person name="Bayraktaroglu L."/>
            <person name="Berman B.P."/>
            <person name="Bettencourt B.R."/>
            <person name="Celniker S.E."/>
            <person name="de Grey A.D.N.J."/>
            <person name="Drysdale R.A."/>
            <person name="Harris N.L."/>
            <person name="Richter J."/>
            <person name="Russo S."/>
            <person name="Schroeder A.J."/>
            <person name="Shu S.Q."/>
            <person name="Stapleton M."/>
            <person name="Yamada C."/>
            <person name="Ashburner M."/>
            <person name="Gelbart W.M."/>
            <person name="Rubin G.M."/>
            <person name="Lewis S.E."/>
        </authorList>
    </citation>
    <scope>GENOME REANNOTATION</scope>
    <source>
        <strain>Berkeley</strain>
    </source>
</reference>
<reference key="3">
    <citation type="journal article" date="2002" name="Genome Biol.">
        <title>A Drosophila full-length cDNA resource.</title>
        <authorList>
            <person name="Stapleton M."/>
            <person name="Carlson J.W."/>
            <person name="Brokstein P."/>
            <person name="Yu C."/>
            <person name="Champe M."/>
            <person name="George R.A."/>
            <person name="Guarin H."/>
            <person name="Kronmiller B."/>
            <person name="Pacleb J.M."/>
            <person name="Park S."/>
            <person name="Wan K.H."/>
            <person name="Rubin G.M."/>
            <person name="Celniker S.E."/>
        </authorList>
    </citation>
    <scope>NUCLEOTIDE SEQUENCE [LARGE SCALE MRNA]</scope>
    <source>
        <strain>Berkeley</strain>
        <tissue>Embryo</tissue>
    </source>
</reference>
<reference key="4">
    <citation type="journal article" date="2008" name="J. Proteome Res.">
        <title>Phosphoproteome analysis of Drosophila melanogaster embryos.</title>
        <authorList>
            <person name="Zhai B."/>
            <person name="Villen J."/>
            <person name="Beausoleil S.A."/>
            <person name="Mintseris J."/>
            <person name="Gygi S.P."/>
        </authorList>
    </citation>
    <scope>PHOSPHORYLATION [LARGE SCALE ANALYSIS] AT SER-145; SER-148 AND SER-456</scope>
    <scope>IDENTIFICATION BY MASS SPECTROMETRY</scope>
    <source>
        <tissue>Embryo</tissue>
    </source>
</reference>